<evidence type="ECO:0000255" key="1">
    <source>
        <dbReference type="HAMAP-Rule" id="MF_01306"/>
    </source>
</evidence>
<evidence type="ECO:0000305" key="2"/>
<reference key="1">
    <citation type="submission" date="2006-10" db="EMBL/GenBank/DDBJ databases">
        <title>Complete sequence of Syntrophobacter fumaroxidans MPOB.</title>
        <authorList>
            <consortium name="US DOE Joint Genome Institute"/>
            <person name="Copeland A."/>
            <person name="Lucas S."/>
            <person name="Lapidus A."/>
            <person name="Barry K."/>
            <person name="Detter J.C."/>
            <person name="Glavina del Rio T."/>
            <person name="Hammon N."/>
            <person name="Israni S."/>
            <person name="Pitluck S."/>
            <person name="Goltsman E.G."/>
            <person name="Martinez M."/>
            <person name="Schmutz J."/>
            <person name="Larimer F."/>
            <person name="Land M."/>
            <person name="Hauser L."/>
            <person name="Kyrpides N."/>
            <person name="Kim E."/>
            <person name="Boone D.R."/>
            <person name="Brockman F."/>
            <person name="Culley D."/>
            <person name="Ferry J."/>
            <person name="Gunsalus R."/>
            <person name="McInerney M.J."/>
            <person name="Morrison M."/>
            <person name="Plugge C."/>
            <person name="Rohlin L."/>
            <person name="Scholten J."/>
            <person name="Sieber J."/>
            <person name="Stams A.J.M."/>
            <person name="Worm P."/>
            <person name="Henstra A.M."/>
            <person name="Richardson P."/>
        </authorList>
    </citation>
    <scope>NUCLEOTIDE SEQUENCE [LARGE SCALE GENOMIC DNA]</scope>
    <source>
        <strain>DSM 10017 / MPOB</strain>
    </source>
</reference>
<dbReference type="EMBL" id="CP000478">
    <property type="protein sequence ID" value="ABK17268.1"/>
    <property type="molecule type" value="Genomic_DNA"/>
</dbReference>
<dbReference type="RefSeq" id="WP_011698438.1">
    <property type="nucleotide sequence ID" value="NC_008554.1"/>
</dbReference>
<dbReference type="SMR" id="A0LIL6"/>
<dbReference type="FunCoup" id="A0LIL6">
    <property type="interactions" value="682"/>
</dbReference>
<dbReference type="STRING" id="335543.Sfum_1581"/>
<dbReference type="KEGG" id="sfu:Sfum_1581"/>
<dbReference type="eggNOG" id="COG0522">
    <property type="taxonomic scope" value="Bacteria"/>
</dbReference>
<dbReference type="HOGENOM" id="CLU_092403_0_2_7"/>
<dbReference type="InParanoid" id="A0LIL6"/>
<dbReference type="OrthoDB" id="9803672at2"/>
<dbReference type="Proteomes" id="UP000001784">
    <property type="component" value="Chromosome"/>
</dbReference>
<dbReference type="GO" id="GO:0015935">
    <property type="term" value="C:small ribosomal subunit"/>
    <property type="evidence" value="ECO:0007669"/>
    <property type="project" value="InterPro"/>
</dbReference>
<dbReference type="GO" id="GO:0019843">
    <property type="term" value="F:rRNA binding"/>
    <property type="evidence" value="ECO:0007669"/>
    <property type="project" value="UniProtKB-UniRule"/>
</dbReference>
<dbReference type="GO" id="GO:0003735">
    <property type="term" value="F:structural constituent of ribosome"/>
    <property type="evidence" value="ECO:0007669"/>
    <property type="project" value="InterPro"/>
</dbReference>
<dbReference type="GO" id="GO:0042274">
    <property type="term" value="P:ribosomal small subunit biogenesis"/>
    <property type="evidence" value="ECO:0007669"/>
    <property type="project" value="TreeGrafter"/>
</dbReference>
<dbReference type="GO" id="GO:0006412">
    <property type="term" value="P:translation"/>
    <property type="evidence" value="ECO:0007669"/>
    <property type="project" value="UniProtKB-UniRule"/>
</dbReference>
<dbReference type="CDD" id="cd00165">
    <property type="entry name" value="S4"/>
    <property type="match status" value="1"/>
</dbReference>
<dbReference type="FunFam" id="1.10.1050.10:FF:000001">
    <property type="entry name" value="30S ribosomal protein S4"/>
    <property type="match status" value="1"/>
</dbReference>
<dbReference type="FunFam" id="3.10.290.10:FF:000001">
    <property type="entry name" value="30S ribosomal protein S4"/>
    <property type="match status" value="1"/>
</dbReference>
<dbReference type="Gene3D" id="1.10.1050.10">
    <property type="entry name" value="Ribosomal Protein S4 Delta 41, Chain A, domain 1"/>
    <property type="match status" value="1"/>
</dbReference>
<dbReference type="Gene3D" id="3.10.290.10">
    <property type="entry name" value="RNA-binding S4 domain"/>
    <property type="match status" value="1"/>
</dbReference>
<dbReference type="HAMAP" id="MF_01306_B">
    <property type="entry name" value="Ribosomal_uS4_B"/>
    <property type="match status" value="1"/>
</dbReference>
<dbReference type="InterPro" id="IPR022801">
    <property type="entry name" value="Ribosomal_uS4"/>
</dbReference>
<dbReference type="InterPro" id="IPR005709">
    <property type="entry name" value="Ribosomal_uS4_bac-type"/>
</dbReference>
<dbReference type="InterPro" id="IPR018079">
    <property type="entry name" value="Ribosomal_uS4_CS"/>
</dbReference>
<dbReference type="InterPro" id="IPR001912">
    <property type="entry name" value="Ribosomal_uS4_N"/>
</dbReference>
<dbReference type="InterPro" id="IPR002942">
    <property type="entry name" value="S4_RNA-bd"/>
</dbReference>
<dbReference type="InterPro" id="IPR036986">
    <property type="entry name" value="S4_RNA-bd_sf"/>
</dbReference>
<dbReference type="NCBIfam" id="NF003717">
    <property type="entry name" value="PRK05327.1"/>
    <property type="match status" value="1"/>
</dbReference>
<dbReference type="NCBIfam" id="TIGR01017">
    <property type="entry name" value="rpsD_bact"/>
    <property type="match status" value="1"/>
</dbReference>
<dbReference type="PANTHER" id="PTHR11831">
    <property type="entry name" value="30S 40S RIBOSOMAL PROTEIN"/>
    <property type="match status" value="1"/>
</dbReference>
<dbReference type="PANTHER" id="PTHR11831:SF4">
    <property type="entry name" value="SMALL RIBOSOMAL SUBUNIT PROTEIN US4M"/>
    <property type="match status" value="1"/>
</dbReference>
<dbReference type="Pfam" id="PF00163">
    <property type="entry name" value="Ribosomal_S4"/>
    <property type="match status" value="1"/>
</dbReference>
<dbReference type="Pfam" id="PF01479">
    <property type="entry name" value="S4"/>
    <property type="match status" value="1"/>
</dbReference>
<dbReference type="SMART" id="SM01390">
    <property type="entry name" value="Ribosomal_S4"/>
    <property type="match status" value="1"/>
</dbReference>
<dbReference type="SMART" id="SM00363">
    <property type="entry name" value="S4"/>
    <property type="match status" value="1"/>
</dbReference>
<dbReference type="SUPFAM" id="SSF55174">
    <property type="entry name" value="Alpha-L RNA-binding motif"/>
    <property type="match status" value="1"/>
</dbReference>
<dbReference type="PROSITE" id="PS00632">
    <property type="entry name" value="RIBOSOMAL_S4"/>
    <property type="match status" value="1"/>
</dbReference>
<dbReference type="PROSITE" id="PS50889">
    <property type="entry name" value="S4"/>
    <property type="match status" value="1"/>
</dbReference>
<keyword id="KW-1185">Reference proteome</keyword>
<keyword id="KW-0687">Ribonucleoprotein</keyword>
<keyword id="KW-0689">Ribosomal protein</keyword>
<keyword id="KW-0694">RNA-binding</keyword>
<keyword id="KW-0699">rRNA-binding</keyword>
<organism>
    <name type="scientific">Syntrophobacter fumaroxidans (strain DSM 10017 / MPOB)</name>
    <dbReference type="NCBI Taxonomy" id="335543"/>
    <lineage>
        <taxon>Bacteria</taxon>
        <taxon>Pseudomonadati</taxon>
        <taxon>Thermodesulfobacteriota</taxon>
        <taxon>Syntrophobacteria</taxon>
        <taxon>Syntrophobacterales</taxon>
        <taxon>Syntrophobacteraceae</taxon>
        <taxon>Syntrophobacter</taxon>
    </lineage>
</organism>
<sequence>MARYTDSSCRICRRETMKLYLKGDRCYSDKCAVERRNYPPGQHGQGRGKFSDYGLQLREKQKIRRMYGLVEKQFKTYFKHADRQKGVTGTNFLTLLERRIDNTVYRLGFASSRAQARQLVRHSHFLVNGKKVNIPSFLLRPGDSVSVVEGSRQLQMINEAMEAMPRRGLPPWLELDKAKYEGVFKTLPTREEMNLPVQEQLVVEFYSK</sequence>
<accession>A0LIL6</accession>
<protein>
    <recommendedName>
        <fullName evidence="1">Small ribosomal subunit protein uS4</fullName>
    </recommendedName>
    <alternativeName>
        <fullName evidence="2">30S ribosomal protein S4</fullName>
    </alternativeName>
</protein>
<feature type="chain" id="PRO_0000293390" description="Small ribosomal subunit protein uS4">
    <location>
        <begin position="1"/>
        <end position="208"/>
    </location>
</feature>
<feature type="domain" description="S4 RNA-binding" evidence="1">
    <location>
        <begin position="98"/>
        <end position="160"/>
    </location>
</feature>
<gene>
    <name evidence="1" type="primary">rpsD</name>
    <name type="ordered locus">Sfum_1581</name>
</gene>
<comment type="function">
    <text evidence="1">One of the primary rRNA binding proteins, it binds directly to 16S rRNA where it nucleates assembly of the body of the 30S subunit.</text>
</comment>
<comment type="function">
    <text evidence="1">With S5 and S12 plays an important role in translational accuracy.</text>
</comment>
<comment type="subunit">
    <text evidence="1">Part of the 30S ribosomal subunit. Contacts protein S5. The interaction surface between S4 and S5 is involved in control of translational fidelity.</text>
</comment>
<comment type="similarity">
    <text evidence="1">Belongs to the universal ribosomal protein uS4 family.</text>
</comment>
<proteinExistence type="inferred from homology"/>
<name>RS4_SYNFM</name>